<comment type="function">
    <text evidence="1">Binds to DNA and alters its conformation. May be involved in regulation of gene expression, nucleoid organization and DNA protection.</text>
</comment>
<comment type="subunit">
    <text evidence="1">Homodimer.</text>
</comment>
<comment type="subcellular location">
    <subcellularLocation>
        <location evidence="1">Cytoplasm</location>
        <location evidence="1">Nucleoid</location>
    </subcellularLocation>
</comment>
<comment type="similarity">
    <text evidence="1">Belongs to the YbaB/EbfC family.</text>
</comment>
<reference key="1">
    <citation type="submission" date="2009-03" db="EMBL/GenBank/DDBJ databases">
        <title>Brucella melitensis ATCC 23457 whole genome shotgun sequencing project.</title>
        <authorList>
            <person name="Setubal J.C."/>
            <person name="Boyle S."/>
            <person name="Crasta O.R."/>
            <person name="Gillespie J.J."/>
            <person name="Kenyon R.W."/>
            <person name="Lu J."/>
            <person name="Mane S."/>
            <person name="Nagrani S."/>
            <person name="Shallom J.M."/>
            <person name="Shallom S."/>
            <person name="Shukla M."/>
            <person name="Snyder E.E."/>
            <person name="Sobral B.W."/>
            <person name="Wattam A.R."/>
            <person name="Will R."/>
            <person name="Williams K."/>
            <person name="Yoo H."/>
            <person name="Munk C."/>
            <person name="Tapia R."/>
            <person name="Han C."/>
            <person name="Detter J.C."/>
            <person name="Bruce D."/>
            <person name="Brettin T.S."/>
        </authorList>
    </citation>
    <scope>NUCLEOTIDE SEQUENCE [LARGE SCALE GENOMIC DNA]</scope>
    <source>
        <strain>ATCC 23457</strain>
    </source>
</reference>
<keyword id="KW-0963">Cytoplasm</keyword>
<keyword id="KW-0238">DNA-binding</keyword>
<dbReference type="EMBL" id="CP001488">
    <property type="protein sequence ID" value="ACN99854.1"/>
    <property type="molecule type" value="Genomic_DNA"/>
</dbReference>
<dbReference type="RefSeq" id="WP_004686684.1">
    <property type="nucleotide sequence ID" value="NC_012441.1"/>
</dbReference>
<dbReference type="SMR" id="C0RG97"/>
<dbReference type="KEGG" id="bmi:BMEA_A0033"/>
<dbReference type="HOGENOM" id="CLU_140930_0_1_5"/>
<dbReference type="Proteomes" id="UP000001748">
    <property type="component" value="Chromosome I"/>
</dbReference>
<dbReference type="GO" id="GO:0043590">
    <property type="term" value="C:bacterial nucleoid"/>
    <property type="evidence" value="ECO:0007669"/>
    <property type="project" value="UniProtKB-UniRule"/>
</dbReference>
<dbReference type="GO" id="GO:0005829">
    <property type="term" value="C:cytosol"/>
    <property type="evidence" value="ECO:0007669"/>
    <property type="project" value="TreeGrafter"/>
</dbReference>
<dbReference type="GO" id="GO:0003677">
    <property type="term" value="F:DNA binding"/>
    <property type="evidence" value="ECO:0007669"/>
    <property type="project" value="UniProtKB-UniRule"/>
</dbReference>
<dbReference type="Gene3D" id="3.30.1310.10">
    <property type="entry name" value="Nucleoid-associated protein YbaB-like domain"/>
    <property type="match status" value="1"/>
</dbReference>
<dbReference type="HAMAP" id="MF_00274">
    <property type="entry name" value="DNA_YbaB_EbfC"/>
    <property type="match status" value="1"/>
</dbReference>
<dbReference type="InterPro" id="IPR036894">
    <property type="entry name" value="YbaB-like_sf"/>
</dbReference>
<dbReference type="InterPro" id="IPR004401">
    <property type="entry name" value="YbaB/EbfC"/>
</dbReference>
<dbReference type="NCBIfam" id="TIGR00103">
    <property type="entry name" value="DNA_YbaB_EbfC"/>
    <property type="match status" value="1"/>
</dbReference>
<dbReference type="PANTHER" id="PTHR33449">
    <property type="entry name" value="NUCLEOID-ASSOCIATED PROTEIN YBAB"/>
    <property type="match status" value="1"/>
</dbReference>
<dbReference type="PANTHER" id="PTHR33449:SF1">
    <property type="entry name" value="NUCLEOID-ASSOCIATED PROTEIN YBAB"/>
    <property type="match status" value="1"/>
</dbReference>
<dbReference type="Pfam" id="PF02575">
    <property type="entry name" value="YbaB_DNA_bd"/>
    <property type="match status" value="1"/>
</dbReference>
<dbReference type="PIRSF" id="PIRSF004555">
    <property type="entry name" value="UCP004555"/>
    <property type="match status" value="1"/>
</dbReference>
<dbReference type="SUPFAM" id="SSF82607">
    <property type="entry name" value="YbaB-like"/>
    <property type="match status" value="1"/>
</dbReference>
<accession>C0RG97</accession>
<gene>
    <name type="ordered locus">BMEA_A0033</name>
</gene>
<organism>
    <name type="scientific">Brucella melitensis biotype 2 (strain ATCC 23457)</name>
    <dbReference type="NCBI Taxonomy" id="546272"/>
    <lineage>
        <taxon>Bacteria</taxon>
        <taxon>Pseudomonadati</taxon>
        <taxon>Pseudomonadota</taxon>
        <taxon>Alphaproteobacteria</taxon>
        <taxon>Hyphomicrobiales</taxon>
        <taxon>Brucellaceae</taxon>
        <taxon>Brucella/Ochrobactrum group</taxon>
        <taxon>Brucella</taxon>
    </lineage>
</organism>
<sequence>MRDMMGMMKQAKELQAKMKAMQDEIATMEASASSGGGLVTVTLSGKGTLSALKIDPSLMKEDEVEILEDLIIAAHNDGKAKLEAAMAEKTQSLTAGLPIPPGFKLPF</sequence>
<feature type="chain" id="PRO_1000197644" description="Nucleoid-associated protein BMEA_A0033">
    <location>
        <begin position="1"/>
        <end position="107"/>
    </location>
</feature>
<proteinExistence type="inferred from homology"/>
<protein>
    <recommendedName>
        <fullName evidence="1">Nucleoid-associated protein BMEA_A0033</fullName>
    </recommendedName>
</protein>
<name>Y033_BRUMB</name>
<evidence type="ECO:0000255" key="1">
    <source>
        <dbReference type="HAMAP-Rule" id="MF_00274"/>
    </source>
</evidence>